<keyword id="KW-0963">Cytoplasm</keyword>
<keyword id="KW-0251">Elongation factor</keyword>
<keyword id="KW-0342">GTP-binding</keyword>
<keyword id="KW-0547">Nucleotide-binding</keyword>
<keyword id="KW-0648">Protein biosynthesis</keyword>
<keyword id="KW-1185">Reference proteome</keyword>
<sequence>MSKDLSKVRNIGISAHIDSGKTTLTERILFYTDRIHAIHEVRGKDGVGAKMDSMELEKERGITIQSAATFCNWKGTDINIIDTPGHVDFTVEVERALRVLDGAVLVLCSVGGVQSQSITVNRQMTRYNVPRIAFINKCDRTGANPAKVTGQLQEKLQLNAHMMQMPIGLEGDLVGMVDLVTMKAVYYEGENGDEIRITDIPAEMLDEATEKRETLLEEISMFSEELMEALLEDSENVDIDLIYKAVRQGTIALEFTPVFMGSAYKNKGVQALLDAVETYLPCPTDVENIGLDLDNEETEFAVTNNDEDPLIMLAFKLEDGRYGQLTYVRTYQGQLTKGDTVYNRRTGRKVKIGRLCRMHSDEMEEIDGVGSGDIVALFGVDCASGDTFTNDAVNCSMTSMHVPEPVISLSIKPIDNKAQINMSKALNRFTKEDPTFRTFVDHETNETIISGMGELHLEVYVERMKREYAAEVEVGKPQVSYRETITQRAEFNYTHKKQTGGTGQFGRVAGYMEPLDEGDYEFVDKIVGGAIPREFISSCDKGFQKSLVKGHLCGAGITGVRCVINDGSFHAVDSSDVAFQIASVGAFKDGYMKAKPVIMEPIMKVSVEGPSEFQGAVMGSINQRRGMIIGSNEEGTYSVIEAEVPLSEMFGYSTTLRSLTQGKAEFTMEFANFKPVPKTVGDNLIKAHEEERKNG</sequence>
<gene>
    <name evidence="1" type="primary">fusA1</name>
    <name type="ordered locus">DP0007</name>
</gene>
<organism>
    <name type="scientific">Desulfotalea psychrophila (strain LSv54 / DSM 12343)</name>
    <dbReference type="NCBI Taxonomy" id="177439"/>
    <lineage>
        <taxon>Bacteria</taxon>
        <taxon>Pseudomonadati</taxon>
        <taxon>Thermodesulfobacteriota</taxon>
        <taxon>Desulfobulbia</taxon>
        <taxon>Desulfobulbales</taxon>
        <taxon>Desulfocapsaceae</taxon>
        <taxon>Desulfotalea</taxon>
    </lineage>
</organism>
<protein>
    <recommendedName>
        <fullName evidence="1">Elongation factor G 1</fullName>
        <shortName evidence="1">EF-G 1</shortName>
    </recommendedName>
</protein>
<dbReference type="EMBL" id="CR522870">
    <property type="protein sequence ID" value="CAG34736.1"/>
    <property type="molecule type" value="Genomic_DNA"/>
</dbReference>
<dbReference type="RefSeq" id="WP_011187252.1">
    <property type="nucleotide sequence ID" value="NC_006138.1"/>
</dbReference>
<dbReference type="SMR" id="Q6ASC7"/>
<dbReference type="STRING" id="177439.DP0007"/>
<dbReference type="KEGG" id="dps:DP0007"/>
<dbReference type="eggNOG" id="COG0480">
    <property type="taxonomic scope" value="Bacteria"/>
</dbReference>
<dbReference type="HOGENOM" id="CLU_002794_4_0_7"/>
<dbReference type="OrthoDB" id="9760518at2"/>
<dbReference type="Proteomes" id="UP000000602">
    <property type="component" value="Chromosome"/>
</dbReference>
<dbReference type="GO" id="GO:0005737">
    <property type="term" value="C:cytoplasm"/>
    <property type="evidence" value="ECO:0007669"/>
    <property type="project" value="UniProtKB-SubCell"/>
</dbReference>
<dbReference type="GO" id="GO:0005525">
    <property type="term" value="F:GTP binding"/>
    <property type="evidence" value="ECO:0007669"/>
    <property type="project" value="UniProtKB-UniRule"/>
</dbReference>
<dbReference type="GO" id="GO:0003924">
    <property type="term" value="F:GTPase activity"/>
    <property type="evidence" value="ECO:0007669"/>
    <property type="project" value="InterPro"/>
</dbReference>
<dbReference type="GO" id="GO:0003746">
    <property type="term" value="F:translation elongation factor activity"/>
    <property type="evidence" value="ECO:0007669"/>
    <property type="project" value="UniProtKB-UniRule"/>
</dbReference>
<dbReference type="CDD" id="cd01886">
    <property type="entry name" value="EF-G"/>
    <property type="match status" value="1"/>
</dbReference>
<dbReference type="CDD" id="cd16262">
    <property type="entry name" value="EFG_III"/>
    <property type="match status" value="1"/>
</dbReference>
<dbReference type="CDD" id="cd01434">
    <property type="entry name" value="EFG_mtEFG1_IV"/>
    <property type="match status" value="1"/>
</dbReference>
<dbReference type="CDD" id="cd04091">
    <property type="entry name" value="mtEFG1_II_like"/>
    <property type="match status" value="1"/>
</dbReference>
<dbReference type="FunFam" id="3.30.230.10:FF:000003">
    <property type="entry name" value="Elongation factor G"/>
    <property type="match status" value="1"/>
</dbReference>
<dbReference type="FunFam" id="3.30.70.240:FF:000001">
    <property type="entry name" value="Elongation factor G"/>
    <property type="match status" value="1"/>
</dbReference>
<dbReference type="FunFam" id="3.30.70.870:FF:000001">
    <property type="entry name" value="Elongation factor G"/>
    <property type="match status" value="1"/>
</dbReference>
<dbReference type="FunFam" id="3.40.50.300:FF:000029">
    <property type="entry name" value="Elongation factor G"/>
    <property type="match status" value="1"/>
</dbReference>
<dbReference type="FunFam" id="2.40.30.10:FF:000022">
    <property type="entry name" value="Elongation factor G, mitochondrial"/>
    <property type="match status" value="1"/>
</dbReference>
<dbReference type="Gene3D" id="3.30.230.10">
    <property type="match status" value="1"/>
</dbReference>
<dbReference type="Gene3D" id="3.30.70.240">
    <property type="match status" value="1"/>
</dbReference>
<dbReference type="Gene3D" id="3.30.70.870">
    <property type="entry name" value="Elongation Factor G (Translational Gtpase), domain 3"/>
    <property type="match status" value="1"/>
</dbReference>
<dbReference type="Gene3D" id="3.40.50.300">
    <property type="entry name" value="P-loop containing nucleotide triphosphate hydrolases"/>
    <property type="match status" value="1"/>
</dbReference>
<dbReference type="Gene3D" id="2.40.30.10">
    <property type="entry name" value="Translation factors"/>
    <property type="match status" value="1"/>
</dbReference>
<dbReference type="HAMAP" id="MF_00054_B">
    <property type="entry name" value="EF_G_EF_2_B"/>
    <property type="match status" value="1"/>
</dbReference>
<dbReference type="InterPro" id="IPR041095">
    <property type="entry name" value="EFG_II"/>
</dbReference>
<dbReference type="InterPro" id="IPR009022">
    <property type="entry name" value="EFG_III"/>
</dbReference>
<dbReference type="InterPro" id="IPR035647">
    <property type="entry name" value="EFG_III/V"/>
</dbReference>
<dbReference type="InterPro" id="IPR047872">
    <property type="entry name" value="EFG_IV"/>
</dbReference>
<dbReference type="InterPro" id="IPR000640">
    <property type="entry name" value="EFG_V-like"/>
</dbReference>
<dbReference type="InterPro" id="IPR004161">
    <property type="entry name" value="EFTu-like_2"/>
</dbReference>
<dbReference type="InterPro" id="IPR031157">
    <property type="entry name" value="G_TR_CS"/>
</dbReference>
<dbReference type="InterPro" id="IPR027417">
    <property type="entry name" value="P-loop_NTPase"/>
</dbReference>
<dbReference type="InterPro" id="IPR020568">
    <property type="entry name" value="Ribosomal_Su5_D2-typ_SF"/>
</dbReference>
<dbReference type="InterPro" id="IPR014721">
    <property type="entry name" value="Ribsml_uS5_D2-typ_fold_subgr"/>
</dbReference>
<dbReference type="InterPro" id="IPR005225">
    <property type="entry name" value="Small_GTP-bd"/>
</dbReference>
<dbReference type="InterPro" id="IPR000795">
    <property type="entry name" value="T_Tr_GTP-bd_dom"/>
</dbReference>
<dbReference type="InterPro" id="IPR009000">
    <property type="entry name" value="Transl_B-barrel_sf"/>
</dbReference>
<dbReference type="InterPro" id="IPR004540">
    <property type="entry name" value="Transl_elong_EFG/EF2"/>
</dbReference>
<dbReference type="InterPro" id="IPR005517">
    <property type="entry name" value="Transl_elong_EFG/EF2_IV"/>
</dbReference>
<dbReference type="NCBIfam" id="TIGR00484">
    <property type="entry name" value="EF-G"/>
    <property type="match status" value="1"/>
</dbReference>
<dbReference type="NCBIfam" id="NF009381">
    <property type="entry name" value="PRK12740.1-5"/>
    <property type="match status" value="1"/>
</dbReference>
<dbReference type="NCBIfam" id="TIGR00231">
    <property type="entry name" value="small_GTP"/>
    <property type="match status" value="1"/>
</dbReference>
<dbReference type="PANTHER" id="PTHR43636">
    <property type="entry name" value="ELONGATION FACTOR G, MITOCHONDRIAL"/>
    <property type="match status" value="1"/>
</dbReference>
<dbReference type="PANTHER" id="PTHR43636:SF2">
    <property type="entry name" value="ELONGATION FACTOR G, MITOCHONDRIAL"/>
    <property type="match status" value="1"/>
</dbReference>
<dbReference type="Pfam" id="PF00679">
    <property type="entry name" value="EFG_C"/>
    <property type="match status" value="1"/>
</dbReference>
<dbReference type="Pfam" id="PF14492">
    <property type="entry name" value="EFG_III"/>
    <property type="match status" value="1"/>
</dbReference>
<dbReference type="Pfam" id="PF03764">
    <property type="entry name" value="EFG_IV"/>
    <property type="match status" value="1"/>
</dbReference>
<dbReference type="Pfam" id="PF00009">
    <property type="entry name" value="GTP_EFTU"/>
    <property type="match status" value="1"/>
</dbReference>
<dbReference type="Pfam" id="PF03144">
    <property type="entry name" value="GTP_EFTU_D2"/>
    <property type="match status" value="1"/>
</dbReference>
<dbReference type="PRINTS" id="PR00315">
    <property type="entry name" value="ELONGATNFCT"/>
</dbReference>
<dbReference type="SMART" id="SM00838">
    <property type="entry name" value="EFG_C"/>
    <property type="match status" value="1"/>
</dbReference>
<dbReference type="SMART" id="SM00889">
    <property type="entry name" value="EFG_IV"/>
    <property type="match status" value="1"/>
</dbReference>
<dbReference type="SUPFAM" id="SSF54980">
    <property type="entry name" value="EF-G C-terminal domain-like"/>
    <property type="match status" value="2"/>
</dbReference>
<dbReference type="SUPFAM" id="SSF52540">
    <property type="entry name" value="P-loop containing nucleoside triphosphate hydrolases"/>
    <property type="match status" value="1"/>
</dbReference>
<dbReference type="SUPFAM" id="SSF54211">
    <property type="entry name" value="Ribosomal protein S5 domain 2-like"/>
    <property type="match status" value="1"/>
</dbReference>
<dbReference type="SUPFAM" id="SSF50447">
    <property type="entry name" value="Translation proteins"/>
    <property type="match status" value="1"/>
</dbReference>
<dbReference type="PROSITE" id="PS00301">
    <property type="entry name" value="G_TR_1"/>
    <property type="match status" value="1"/>
</dbReference>
<dbReference type="PROSITE" id="PS51722">
    <property type="entry name" value="G_TR_2"/>
    <property type="match status" value="1"/>
</dbReference>
<name>EFG1_DESPS</name>
<accession>Q6ASC7</accession>
<comment type="function">
    <text evidence="1">Catalyzes the GTP-dependent ribosomal translocation step during translation elongation. During this step, the ribosome changes from the pre-translocational (PRE) to the post-translocational (POST) state as the newly formed A-site-bound peptidyl-tRNA and P-site-bound deacylated tRNA move to the P and E sites, respectively. Catalyzes the coordinated movement of the two tRNA molecules, the mRNA and conformational changes in the ribosome.</text>
</comment>
<comment type="subcellular location">
    <subcellularLocation>
        <location evidence="1">Cytoplasm</location>
    </subcellularLocation>
</comment>
<comment type="similarity">
    <text evidence="1">Belongs to the TRAFAC class translation factor GTPase superfamily. Classic translation factor GTPase family. EF-G/EF-2 subfamily.</text>
</comment>
<proteinExistence type="inferred from homology"/>
<evidence type="ECO:0000255" key="1">
    <source>
        <dbReference type="HAMAP-Rule" id="MF_00054"/>
    </source>
</evidence>
<reference key="1">
    <citation type="journal article" date="2004" name="Environ. Microbiol.">
        <title>The genome of Desulfotalea psychrophila, a sulfate-reducing bacterium from permanently cold Arctic sediments.</title>
        <authorList>
            <person name="Rabus R."/>
            <person name="Ruepp A."/>
            <person name="Frickey T."/>
            <person name="Rattei T."/>
            <person name="Fartmann B."/>
            <person name="Stark M."/>
            <person name="Bauer M."/>
            <person name="Zibat A."/>
            <person name="Lombardot T."/>
            <person name="Becker I."/>
            <person name="Amann J."/>
            <person name="Gellner K."/>
            <person name="Teeling H."/>
            <person name="Leuschner W.D."/>
            <person name="Gloeckner F.-O."/>
            <person name="Lupas A.N."/>
            <person name="Amann R."/>
            <person name="Klenk H.-P."/>
        </authorList>
    </citation>
    <scope>NUCLEOTIDE SEQUENCE [LARGE SCALE GENOMIC DNA]</scope>
    <source>
        <strain>DSM 12343 / LSv54</strain>
    </source>
</reference>
<feature type="chain" id="PRO_0000091116" description="Elongation factor G 1">
    <location>
        <begin position="1"/>
        <end position="695"/>
    </location>
</feature>
<feature type="domain" description="tr-type G">
    <location>
        <begin position="6"/>
        <end position="284"/>
    </location>
</feature>
<feature type="binding site" evidence="1">
    <location>
        <begin position="15"/>
        <end position="22"/>
    </location>
    <ligand>
        <name>GTP</name>
        <dbReference type="ChEBI" id="CHEBI:37565"/>
    </ligand>
</feature>
<feature type="binding site" evidence="1">
    <location>
        <begin position="82"/>
        <end position="86"/>
    </location>
    <ligand>
        <name>GTP</name>
        <dbReference type="ChEBI" id="CHEBI:37565"/>
    </ligand>
</feature>
<feature type="binding site" evidence="1">
    <location>
        <begin position="136"/>
        <end position="139"/>
    </location>
    <ligand>
        <name>GTP</name>
        <dbReference type="ChEBI" id="CHEBI:37565"/>
    </ligand>
</feature>